<organismHost>
    <name type="scientific">Orgyia pseudotsugata</name>
    <name type="common">Douglas-fir tussock moth</name>
    <dbReference type="NCBI Taxonomy" id="33414"/>
</organismHost>
<reference key="1">
    <citation type="journal article" date="1997" name="Virology">
        <title>The sequence of the Orgyia pseudotsugata multinucleocapsid nuclear polyhedrosis virus genome.</title>
        <authorList>
            <person name="Ahrens C.H."/>
            <person name="Russell R.R."/>
            <person name="Funk C.J."/>
            <person name="Evans J."/>
            <person name="Harwood S."/>
            <person name="Rohrmann G.F."/>
        </authorList>
    </citation>
    <scope>NUCLEOTIDE SEQUENCE [LARGE SCALE GENOMIC DNA]</scope>
</reference>
<name>Y055_NPVOP</name>
<accession>O10313</accession>
<gene>
    <name type="ORF">ORF59</name>
</gene>
<feature type="chain" id="PRO_0000132990" description="Uncharacterized 8.0 kDa protein">
    <location>
        <begin position="1"/>
        <end position="68"/>
    </location>
</feature>
<protein>
    <recommendedName>
        <fullName>Uncharacterized 8.0 kDa protein</fullName>
    </recommendedName>
</protein>
<organism>
    <name type="scientific">Orgyia pseudotsugata multicapsid polyhedrosis virus</name>
    <name type="common">OpMNPV</name>
    <dbReference type="NCBI Taxonomy" id="262177"/>
    <lineage>
        <taxon>Viruses</taxon>
        <taxon>Viruses incertae sedis</taxon>
        <taxon>Naldaviricetes</taxon>
        <taxon>Lefavirales</taxon>
        <taxon>Baculoviridae</taxon>
        <taxon>Alphabaculovirus</taxon>
        <taxon>Alphabaculovirus orpseudotsugatae</taxon>
    </lineage>
</organism>
<sequence length="68" mass="7969">MKKVSLGKIIESTVEDKYTYRFVRDQKKPNLGEYYKTFESIRAGQHSSTYDVVGKRDYTVVDKLVKKC</sequence>
<dbReference type="EMBL" id="U75930">
    <property type="protein sequence ID" value="AAC59058.1"/>
    <property type="molecule type" value="Genomic_DNA"/>
</dbReference>
<dbReference type="RefSeq" id="NP_046215.1">
    <property type="nucleotide sequence ID" value="NC_001875.2"/>
</dbReference>
<dbReference type="SMR" id="O10313"/>
<dbReference type="KEGG" id="vg:911997"/>
<dbReference type="OrthoDB" id="27447at10239"/>
<dbReference type="Proteomes" id="UP000009248">
    <property type="component" value="Genome"/>
</dbReference>
<dbReference type="InterPro" id="IPR035162">
    <property type="entry name" value="DUF5470"/>
</dbReference>
<dbReference type="Pfam" id="PF17564">
    <property type="entry name" value="DUF5470"/>
    <property type="match status" value="1"/>
</dbReference>
<keyword id="KW-1185">Reference proteome</keyword>
<proteinExistence type="predicted"/>